<protein>
    <recommendedName>
        <fullName>Pyruvate dehydrogenase complex repressor</fullName>
    </recommendedName>
</protein>
<reference key="1">
    <citation type="journal article" date="2002" name="Proc. Natl. Acad. Sci. U.S.A.">
        <title>Extensive mosaic structure revealed by the complete genome sequence of uropathogenic Escherichia coli.</title>
        <authorList>
            <person name="Welch R.A."/>
            <person name="Burland V."/>
            <person name="Plunkett G. III"/>
            <person name="Redford P."/>
            <person name="Roesch P."/>
            <person name="Rasko D."/>
            <person name="Buckles E.L."/>
            <person name="Liou S.-R."/>
            <person name="Boutin A."/>
            <person name="Hackett J."/>
            <person name="Stroud D."/>
            <person name="Mayhew G.F."/>
            <person name="Rose D.J."/>
            <person name="Zhou S."/>
            <person name="Schwartz D.C."/>
            <person name="Perna N.T."/>
            <person name="Mobley H.L.T."/>
            <person name="Donnenberg M.S."/>
            <person name="Blattner F.R."/>
        </authorList>
    </citation>
    <scope>NUCLEOTIDE SEQUENCE [LARGE SCALE GENOMIC DNA]</scope>
    <source>
        <strain>CFT073 / ATCC 700928 / UPEC</strain>
    </source>
</reference>
<organism>
    <name type="scientific">Escherichia coli O6:H1 (strain CFT073 / ATCC 700928 / UPEC)</name>
    <dbReference type="NCBI Taxonomy" id="199310"/>
    <lineage>
        <taxon>Bacteria</taxon>
        <taxon>Pseudomonadati</taxon>
        <taxon>Pseudomonadota</taxon>
        <taxon>Gammaproteobacteria</taxon>
        <taxon>Enterobacterales</taxon>
        <taxon>Enterobacteriaceae</taxon>
        <taxon>Escherichia</taxon>
    </lineage>
</organism>
<keyword id="KW-0238">DNA-binding</keyword>
<keyword id="KW-1185">Reference proteome</keyword>
<keyword id="KW-0678">Repressor</keyword>
<keyword id="KW-0804">Transcription</keyword>
<keyword id="KW-0805">Transcription regulation</keyword>
<gene>
    <name type="primary">pdhR</name>
    <name type="ordered locus">c0140</name>
</gene>
<name>PDHR_ECOL6</name>
<evidence type="ECO:0000250" key="1"/>
<evidence type="ECO:0000255" key="2">
    <source>
        <dbReference type="PROSITE-ProRule" id="PRU00307"/>
    </source>
</evidence>
<evidence type="ECO:0000305" key="3"/>
<dbReference type="EMBL" id="AE014075">
    <property type="protein sequence ID" value="AAN78636.1"/>
    <property type="status" value="ALT_INIT"/>
    <property type="molecule type" value="Genomic_DNA"/>
</dbReference>
<dbReference type="RefSeq" id="WP_000331776.1">
    <property type="nucleotide sequence ID" value="NZ_CP051263.1"/>
</dbReference>
<dbReference type="SMR" id="P0ACM0"/>
<dbReference type="STRING" id="199310.c0140"/>
<dbReference type="GeneID" id="93777323"/>
<dbReference type="KEGG" id="ecc:c0140"/>
<dbReference type="eggNOG" id="COG2186">
    <property type="taxonomic scope" value="Bacteria"/>
</dbReference>
<dbReference type="HOGENOM" id="CLU_017584_9_5_6"/>
<dbReference type="Proteomes" id="UP000001410">
    <property type="component" value="Chromosome"/>
</dbReference>
<dbReference type="GO" id="GO:0003677">
    <property type="term" value="F:DNA binding"/>
    <property type="evidence" value="ECO:0007669"/>
    <property type="project" value="UniProtKB-KW"/>
</dbReference>
<dbReference type="GO" id="GO:0003700">
    <property type="term" value="F:DNA-binding transcription factor activity"/>
    <property type="evidence" value="ECO:0007669"/>
    <property type="project" value="InterPro"/>
</dbReference>
<dbReference type="CDD" id="cd07377">
    <property type="entry name" value="WHTH_GntR"/>
    <property type="match status" value="1"/>
</dbReference>
<dbReference type="FunFam" id="1.10.10.10:FF:000048">
    <property type="entry name" value="Pyruvate dehydrogenase complex transcriptional repressor"/>
    <property type="match status" value="1"/>
</dbReference>
<dbReference type="FunFam" id="1.20.120.530:FF:000001">
    <property type="entry name" value="Pyruvate dehydrogenase complex transcriptional repressor"/>
    <property type="match status" value="1"/>
</dbReference>
<dbReference type="Gene3D" id="1.20.120.530">
    <property type="entry name" value="GntR ligand-binding domain-like"/>
    <property type="match status" value="1"/>
</dbReference>
<dbReference type="Gene3D" id="1.10.10.10">
    <property type="entry name" value="Winged helix-like DNA-binding domain superfamily/Winged helix DNA-binding domain"/>
    <property type="match status" value="1"/>
</dbReference>
<dbReference type="InterPro" id="IPR011711">
    <property type="entry name" value="GntR_C"/>
</dbReference>
<dbReference type="InterPro" id="IPR008920">
    <property type="entry name" value="TF_FadR/GntR_C"/>
</dbReference>
<dbReference type="InterPro" id="IPR000524">
    <property type="entry name" value="Tscrpt_reg_HTH_GntR"/>
</dbReference>
<dbReference type="InterPro" id="IPR036388">
    <property type="entry name" value="WH-like_DNA-bd_sf"/>
</dbReference>
<dbReference type="InterPro" id="IPR036390">
    <property type="entry name" value="WH_DNA-bd_sf"/>
</dbReference>
<dbReference type="NCBIfam" id="NF007001">
    <property type="entry name" value="PRK09464.1"/>
    <property type="match status" value="1"/>
</dbReference>
<dbReference type="PANTHER" id="PTHR43537:SF34">
    <property type="entry name" value="PYRUVATE DEHYDROGENASE COMPLEX REPRESSOR"/>
    <property type="match status" value="1"/>
</dbReference>
<dbReference type="PANTHER" id="PTHR43537">
    <property type="entry name" value="TRANSCRIPTIONAL REGULATOR, GNTR FAMILY"/>
    <property type="match status" value="1"/>
</dbReference>
<dbReference type="Pfam" id="PF07729">
    <property type="entry name" value="FCD"/>
    <property type="match status" value="1"/>
</dbReference>
<dbReference type="Pfam" id="PF00392">
    <property type="entry name" value="GntR"/>
    <property type="match status" value="1"/>
</dbReference>
<dbReference type="PRINTS" id="PR00035">
    <property type="entry name" value="HTHGNTR"/>
</dbReference>
<dbReference type="SMART" id="SM00895">
    <property type="entry name" value="FCD"/>
    <property type="match status" value="1"/>
</dbReference>
<dbReference type="SMART" id="SM00345">
    <property type="entry name" value="HTH_GNTR"/>
    <property type="match status" value="1"/>
</dbReference>
<dbReference type="SUPFAM" id="SSF48008">
    <property type="entry name" value="GntR ligand-binding domain-like"/>
    <property type="match status" value="1"/>
</dbReference>
<dbReference type="SUPFAM" id="SSF46785">
    <property type="entry name" value="Winged helix' DNA-binding domain"/>
    <property type="match status" value="1"/>
</dbReference>
<dbReference type="PROSITE" id="PS50949">
    <property type="entry name" value="HTH_GNTR"/>
    <property type="match status" value="1"/>
</dbReference>
<proteinExistence type="inferred from homology"/>
<comment type="function">
    <text evidence="1">Transcriptional repressor for the pyruvate dehydrogenase complex genes aceEF and lpd.</text>
</comment>
<comment type="sequence caution" evidence="3">
    <conflict type="erroneous initiation">
        <sequence resource="EMBL-CDS" id="AAN78636"/>
    </conflict>
</comment>
<sequence>MAYSKIRQPKLSDVIEQQLEFLILEGTLRPGEKLPPERELAKQFDVSRPSLREAIQRLEAKGLLLRRQGGGTFVQSSLWQSFSDPLVELLSDHPESQYDLLETRHALEGIAAYYAALRSTDEDKERIRELHHAIELAQQSGDLDAESNAVLQYQIAVTEAAHNVVLLHLLRCMEPMLAQNVRQNFELLYSRREMLPLVSSHRTRIFEAIMAGKPEEAREASHRHLAFIEEILLDRSREESRRERSLRRLEQRKN</sequence>
<accession>P0ACM0</accession>
<accession>P06957</accession>
<accession>Q53381</accession>
<feature type="chain" id="PRO_0000050664" description="Pyruvate dehydrogenase complex repressor">
    <location>
        <begin position="1"/>
        <end position="254"/>
    </location>
</feature>
<feature type="domain" description="HTH gntR-type" evidence="2">
    <location>
        <begin position="9"/>
        <end position="77"/>
    </location>
</feature>
<feature type="DNA-binding region" description="H-T-H motif" evidence="2">
    <location>
        <begin position="37"/>
        <end position="56"/>
    </location>
</feature>